<feature type="chain" id="PRO_0000122522" description="Sucrose transport protein SUC1">
    <location>
        <begin position="1"/>
        <end position="513"/>
    </location>
</feature>
<feature type="topological domain" description="Cytoplasmic" evidence="1">
    <location>
        <begin position="1"/>
        <end position="32"/>
    </location>
</feature>
<feature type="transmembrane region" description="Helical" evidence="1">
    <location>
        <begin position="33"/>
        <end position="53"/>
    </location>
</feature>
<feature type="topological domain" description="Extracellular" evidence="1">
    <location>
        <begin position="54"/>
        <end position="67"/>
    </location>
</feature>
<feature type="transmembrane region" description="Helical" evidence="1">
    <location>
        <begin position="68"/>
        <end position="88"/>
    </location>
</feature>
<feature type="topological domain" description="Cytoplasmic" evidence="1">
    <location>
        <begin position="89"/>
        <end position="101"/>
    </location>
</feature>
<feature type="transmembrane region" description="Helical" evidence="1">
    <location>
        <begin position="102"/>
        <end position="122"/>
    </location>
</feature>
<feature type="topological domain" description="Extracellular" evidence="1">
    <location>
        <begin position="123"/>
        <end position="139"/>
    </location>
</feature>
<feature type="transmembrane region" description="Helical" evidence="1">
    <location>
        <begin position="140"/>
        <end position="160"/>
    </location>
</feature>
<feature type="topological domain" description="Cytoplasmic" evidence="1">
    <location>
        <begin position="161"/>
        <end position="178"/>
    </location>
</feature>
<feature type="transmembrane region" description="Helical" evidence="1">
    <location>
        <begin position="179"/>
        <end position="199"/>
    </location>
</feature>
<feature type="topological domain" description="Extracellular" evidence="1">
    <location>
        <begin position="200"/>
        <end position="224"/>
    </location>
</feature>
<feature type="transmembrane region" description="Helical" evidence="1">
    <location>
        <begin position="225"/>
        <end position="245"/>
    </location>
</feature>
<feature type="topological domain" description="Cytoplasmic" evidence="1">
    <location>
        <begin position="246"/>
        <end position="282"/>
    </location>
</feature>
<feature type="transmembrane region" description="Helical" evidence="1">
    <location>
        <begin position="283"/>
        <end position="303"/>
    </location>
</feature>
<feature type="topological domain" description="Extracellular" evidence="1">
    <location>
        <begin position="304"/>
        <end position="334"/>
    </location>
</feature>
<feature type="transmembrane region" description="Helical" evidence="1">
    <location>
        <begin position="335"/>
        <end position="355"/>
    </location>
</feature>
<feature type="topological domain" description="Cytoplasmic" evidence="1">
    <location>
        <begin position="356"/>
        <end position="365"/>
    </location>
</feature>
<feature type="transmembrane region" description="Helical" evidence="1">
    <location>
        <begin position="366"/>
        <end position="386"/>
    </location>
</feature>
<feature type="topological domain" description="Extracellular" evidence="1">
    <location>
        <begin position="387"/>
        <end position="408"/>
    </location>
</feature>
<feature type="transmembrane region" description="Helical" evidence="1">
    <location>
        <begin position="409"/>
        <end position="429"/>
    </location>
</feature>
<feature type="topological domain" description="Cytoplasmic" evidence="1">
    <location>
        <begin position="430"/>
        <end position="441"/>
    </location>
</feature>
<feature type="transmembrane region" description="Helical" evidence="1">
    <location>
        <begin position="442"/>
        <end position="462"/>
    </location>
</feature>
<feature type="topological domain" description="Extracellular" evidence="1">
    <location>
        <begin position="463"/>
        <end position="474"/>
    </location>
</feature>
<feature type="transmembrane region" description="Helical" evidence="1">
    <location>
        <begin position="475"/>
        <end position="495"/>
    </location>
</feature>
<feature type="topological domain" description="Cytoplasmic" evidence="1">
    <location>
        <begin position="496"/>
        <end position="513"/>
    </location>
</feature>
<feature type="region of interest" description="Disordered" evidence="2">
    <location>
        <begin position="1"/>
        <end position="26"/>
    </location>
</feature>
<feature type="compositionally biased region" description="Basic and acidic residues" evidence="2">
    <location>
        <begin position="1"/>
        <end position="11"/>
    </location>
</feature>
<feature type="modified residue" description="Phosphoserine" evidence="13">
    <location>
        <position position="20"/>
    </location>
</feature>
<feature type="mutagenesis site" description="No sucrose transport activity, high instability." evidence="8">
    <original>H</original>
    <variation>C</variation>
    <location>
        <position position="65"/>
    </location>
</feature>
<feature type="mutagenesis site" description="Reduced sucrose transport activity." evidence="8">
    <original>H</original>
    <variation>D</variation>
    <variation>G</variation>
    <variation>L</variation>
    <variation>Y</variation>
    <location>
        <position position="65"/>
    </location>
</feature>
<feature type="mutagenesis site" description="Enhanced sucrose transport activity." evidence="8">
    <original>H</original>
    <variation>K</variation>
    <location>
        <position position="65"/>
    </location>
</feature>
<feature type="mutagenesis site" description="Reduced sensitivity to DEPC." evidence="8">
    <original>H</original>
    <variation>Q</variation>
    <location>
        <position position="65"/>
    </location>
</feature>
<feature type="mutagenesis site" description="Enhanced sucrose transport activity, reduced sensitivity to DEPC." evidence="8">
    <original>H</original>
    <variation>R</variation>
    <location>
        <position position="65"/>
    </location>
</feature>
<feature type="mutagenesis site" description="Reduced sucrose transport activity, reduced sensitivity to DEPC." evidence="8">
    <original>H</original>
    <variation>S</variation>
    <location>
        <position position="65"/>
    </location>
</feature>
<feature type="helix" evidence="14">
    <location>
        <begin position="30"/>
        <end position="37"/>
    </location>
</feature>
<feature type="helix" evidence="14">
    <location>
        <begin position="39"/>
        <end position="48"/>
    </location>
</feature>
<feature type="turn" evidence="14">
    <location>
        <begin position="49"/>
        <end position="53"/>
    </location>
</feature>
<feature type="helix" evidence="14">
    <location>
        <begin position="54"/>
        <end position="61"/>
    </location>
</feature>
<feature type="helix" evidence="14">
    <location>
        <begin position="65"/>
        <end position="90"/>
    </location>
</feature>
<feature type="helix" evidence="14">
    <location>
        <begin position="101"/>
        <end position="119"/>
    </location>
</feature>
<feature type="helix" evidence="14">
    <location>
        <begin position="121"/>
        <end position="128"/>
    </location>
</feature>
<feature type="helix" evidence="14">
    <location>
        <begin position="138"/>
        <end position="170"/>
    </location>
</feature>
<feature type="helix" evidence="14">
    <location>
        <begin position="174"/>
        <end position="199"/>
    </location>
</feature>
<feature type="helix" evidence="14">
    <location>
        <begin position="204"/>
        <end position="207"/>
    </location>
</feature>
<feature type="helix" evidence="14">
    <location>
        <begin position="209"/>
        <end position="211"/>
    </location>
</feature>
<feature type="helix" evidence="14">
    <location>
        <begin position="218"/>
        <end position="244"/>
    </location>
</feature>
<feature type="helix" evidence="14">
    <location>
        <begin position="269"/>
        <end position="277"/>
    </location>
</feature>
<feature type="helix" evidence="14">
    <location>
        <begin position="281"/>
        <end position="310"/>
    </location>
</feature>
<feature type="turn" evidence="14">
    <location>
        <begin position="311"/>
        <end position="313"/>
    </location>
</feature>
<feature type="strand" evidence="14">
    <location>
        <begin position="317"/>
        <end position="320"/>
    </location>
</feature>
<feature type="helix" evidence="14">
    <location>
        <begin position="321"/>
        <end position="349"/>
    </location>
</feature>
<feature type="helix" evidence="14">
    <location>
        <begin position="352"/>
        <end position="358"/>
    </location>
</feature>
<feature type="helix" evidence="14">
    <location>
        <begin position="362"/>
        <end position="394"/>
    </location>
</feature>
<feature type="helix" evidence="14">
    <location>
        <begin position="402"/>
        <end position="414"/>
    </location>
</feature>
<feature type="helix" evidence="14">
    <location>
        <begin position="416"/>
        <end position="422"/>
    </location>
</feature>
<feature type="helix" evidence="14">
    <location>
        <begin position="425"/>
        <end position="437"/>
    </location>
</feature>
<feature type="helix" evidence="14">
    <location>
        <begin position="441"/>
        <end position="448"/>
    </location>
</feature>
<feature type="helix" evidence="14">
    <location>
        <begin position="450"/>
        <end position="469"/>
    </location>
</feature>
<feature type="strand" evidence="14">
    <location>
        <begin position="472"/>
        <end position="474"/>
    </location>
</feature>
<feature type="helix" evidence="14">
    <location>
        <begin position="475"/>
        <end position="494"/>
    </location>
</feature>
<comment type="function">
    <text evidence="3 5 6 7">Responsible for the transport of sucrose into the cell, with the concomitant uptake of protons (symport system). This transport is both voltage- and energy-dependent. Can also transport other glucosides such as maltose, alpha-phenylglucoside and beta-phenylglucoside. May also transport biotin. Required for normal pollen germination and anthocyanin accumulation induced by sucrose.</text>
</comment>
<comment type="catalytic activity">
    <reaction evidence="6 8">
        <text>sucrose(out) + H(+)(out) = sucrose(in) + H(+)(in)</text>
        <dbReference type="Rhea" id="RHEA:72187"/>
        <dbReference type="ChEBI" id="CHEBI:15378"/>
        <dbReference type="ChEBI" id="CHEBI:17992"/>
    </reaction>
    <physiologicalReaction direction="left-to-right" evidence="6 8">
        <dbReference type="Rhea" id="RHEA:72188"/>
    </physiologicalReaction>
</comment>
<comment type="activity regulation">
    <text evidence="6 8">Inhibited by DEPC, protonophores (e.g. dinitrophenol and carbonyl cyanide m-chlorophenyl-hydrazone (CCCP)), and SH group inhibitors (e.g. N-ethylmaleimide (NEM) and p-chloromercuriphenyl sulphonic acid (PCMPS)).</text>
</comment>
<comment type="biophysicochemical properties">
    <kinetics>
        <KM evidence="6 8">450 uM for sucrose (at pH 5.5 and 30 degrees Celsius)</KM>
        <Vmax evidence="6 8">45.0 umol/h/g enzyme (without glucose)</Vmax>
        <Vmax evidence="6 8">154.0 umol/h/g enzyme (in the presence of 10 mM glucose)</Vmax>
    </kinetics>
    <phDependence>
        <text evidence="6 8">Optimum pH is 5-6.</text>
    </phDependence>
</comment>
<comment type="pathway">
    <text>Glycan biosynthesis; sucrose metabolism.</text>
</comment>
<comment type="subcellular location">
    <subcellularLocation>
        <location evidence="1">Membrane</location>
        <topology evidence="1">Multi-pass membrane protein</topology>
    </subcellularLocation>
</comment>
<comment type="tissue specificity">
    <text evidence="3 5">Expressed in flowers (at protein level). Highly expressed in pollen. Expressed in pollen tubes and root vascular cylinder, pericycle and endodermis.</text>
</comment>
<comment type="developmental stage">
    <text evidence="3">Transcripts accumulate in mature pollen before and during germination, but translation starts only when pollen germination initiates, and continues in pollen tubes. Expressed in cells surrounding the vascular bundle of the anther connective tissue, mostly at the dehiscence time. Also present in a ring of parenchymatic cells between the xylem vessels of the style (upper end of the transmitting tract toward which pollen tubes grow). Expressed in the epidermal cell layers of funiculi (at protein level).</text>
</comment>
<comment type="induction">
    <text evidence="4 5">By exogenous sucrose in roots. Induced by sucrose depletion.</text>
</comment>
<comment type="disruption phenotype">
    <text evidence="5">Defective pollen with low rate of germination. Reduction of anthocyanin accumulation in response to exogenous sucrose or maltose.</text>
</comment>
<comment type="similarity">
    <text evidence="10">Belongs to the glycoside-pentoside-hexuronide (GPH) cation symporter transporter (TC 2.A.2.4) family.</text>
</comment>
<proteinExistence type="evidence at protein level"/>
<accession>Q39232</accession>
<sequence>MGAYETEKPTKDAAALETQSPEDFDQPSPLRKIISVASIAAGVQFGWALQLSLLTPYVQLLGIPHKWSSLIWLCGPVSGMIVQPIVGFHSDRCRSKFGRRRPFIATGAALVAVAVFLIGYAADFGYKMGDKLEEKVKVRAIGIFALGFWILDVANNTLQGPCRAFLADLAAGDAKRTRVANAFFSFFMAVGNVLGYAAGSYTNLHKMFPFTMTKACDIYCANLKTCFFLSITLLLIVTVTSLWYVNDKQWSPPPRNADDDEKTSSVPLFGEIFGAFKVMKRPMWMLLIVTALNWIAWFPFLLFDTDWMGREVFGGDSDGNERSKKLYSLGVQSGAMGLMFNSIVLGFMSLGVEWIGRKLGGAKRLWGIVNFILAAGLAMTVLVTKFAEDHRKTAGDLAGPSASVKAGALSLFAVLGIPLAITFSTPFALASIFSSCSGAGQGLSLGVLNLAIVIPQMIVSLGGGPFDALFGGGNLPAFIVAAIAAAISGVLALTVLPSPPPDAPKATTMGGFH</sequence>
<gene>
    <name evidence="9" type="primary">SUC1</name>
    <name evidence="11" type="ordered locus">At1g71880</name>
    <name evidence="12" type="ORF">F17M19.3</name>
</gene>
<organism>
    <name type="scientific">Arabidopsis thaliana</name>
    <name type="common">Mouse-ear cress</name>
    <dbReference type="NCBI Taxonomy" id="3702"/>
    <lineage>
        <taxon>Eukaryota</taxon>
        <taxon>Viridiplantae</taxon>
        <taxon>Streptophyta</taxon>
        <taxon>Embryophyta</taxon>
        <taxon>Tracheophyta</taxon>
        <taxon>Spermatophyta</taxon>
        <taxon>Magnoliopsida</taxon>
        <taxon>eudicotyledons</taxon>
        <taxon>Gunneridae</taxon>
        <taxon>Pentapetalae</taxon>
        <taxon>rosids</taxon>
        <taxon>malvids</taxon>
        <taxon>Brassicales</taxon>
        <taxon>Brassicaceae</taxon>
        <taxon>Camelineae</taxon>
        <taxon>Arabidopsis</taxon>
    </lineage>
</organism>
<protein>
    <recommendedName>
        <fullName evidence="9">Sucrose transport protein SUC1</fullName>
        <shortName evidence="9">AtSUC1</shortName>
    </recommendedName>
    <alternativeName>
        <fullName>Sucrose permease 1</fullName>
    </alternativeName>
    <alternativeName>
        <fullName evidence="9">Sucrose-proton symporter 1</fullName>
    </alternativeName>
</protein>
<evidence type="ECO:0000255" key="1"/>
<evidence type="ECO:0000256" key="2">
    <source>
        <dbReference type="SAM" id="MobiDB-lite"/>
    </source>
</evidence>
<evidence type="ECO:0000269" key="3">
    <source>
    </source>
</evidence>
<evidence type="ECO:0000269" key="4">
    <source>
    </source>
</evidence>
<evidence type="ECO:0000269" key="5">
    <source>
    </source>
</evidence>
<evidence type="ECO:0000269" key="6">
    <source>
    </source>
</evidence>
<evidence type="ECO:0000269" key="7">
    <source>
    </source>
</evidence>
<evidence type="ECO:0000269" key="8">
    <source>
    </source>
</evidence>
<evidence type="ECO:0000303" key="9">
    <source>
    </source>
</evidence>
<evidence type="ECO:0000305" key="10"/>
<evidence type="ECO:0000312" key="11">
    <source>
        <dbReference type="Araport" id="AT1G71880"/>
    </source>
</evidence>
<evidence type="ECO:0000312" key="12">
    <source>
        <dbReference type="EMBL" id="AAG52225.1"/>
    </source>
</evidence>
<evidence type="ECO:0007744" key="13">
    <source>
    </source>
</evidence>
<evidence type="ECO:0007829" key="14">
    <source>
        <dbReference type="PDB" id="8BB6"/>
    </source>
</evidence>
<reference key="1">
    <citation type="journal article" date="1994" name="Plant J.">
        <title>SUC1 and SUC2: two sucrose transporters from Arabidopsis thaliana; expression and characterization in baker's yeast and identification of the histidine-tagged protein.</title>
        <authorList>
            <person name="Sauer N."/>
            <person name="Stolz J."/>
        </authorList>
    </citation>
    <scope>NUCLEOTIDE SEQUENCE [MRNA]</scope>
    <scope>FUNCTION</scope>
    <scope>BIOPHYSICOCHEMICAL PROPERTIES</scope>
    <scope>ACTIVITY REGULATION</scope>
    <scope>TRANSPORTER ACTIVITY</scope>
    <source>
        <strain>cv. Columbia</strain>
    </source>
</reference>
<reference key="2">
    <citation type="journal article" date="2000" name="Nature">
        <title>Sequence and analysis of chromosome 1 of the plant Arabidopsis thaliana.</title>
        <authorList>
            <person name="Theologis A."/>
            <person name="Ecker J.R."/>
            <person name="Palm C.J."/>
            <person name="Federspiel N.A."/>
            <person name="Kaul S."/>
            <person name="White O."/>
            <person name="Alonso J."/>
            <person name="Altafi H."/>
            <person name="Araujo R."/>
            <person name="Bowman C.L."/>
            <person name="Brooks S.Y."/>
            <person name="Buehler E."/>
            <person name="Chan A."/>
            <person name="Chao Q."/>
            <person name="Chen H."/>
            <person name="Cheuk R.F."/>
            <person name="Chin C.W."/>
            <person name="Chung M.K."/>
            <person name="Conn L."/>
            <person name="Conway A.B."/>
            <person name="Conway A.R."/>
            <person name="Creasy T.H."/>
            <person name="Dewar K."/>
            <person name="Dunn P."/>
            <person name="Etgu P."/>
            <person name="Feldblyum T.V."/>
            <person name="Feng J.-D."/>
            <person name="Fong B."/>
            <person name="Fujii C.Y."/>
            <person name="Gill J.E."/>
            <person name="Goldsmith A.D."/>
            <person name="Haas B."/>
            <person name="Hansen N.F."/>
            <person name="Hughes B."/>
            <person name="Huizar L."/>
            <person name="Hunter J.L."/>
            <person name="Jenkins J."/>
            <person name="Johnson-Hopson C."/>
            <person name="Khan S."/>
            <person name="Khaykin E."/>
            <person name="Kim C.J."/>
            <person name="Koo H.L."/>
            <person name="Kremenetskaia I."/>
            <person name="Kurtz D.B."/>
            <person name="Kwan A."/>
            <person name="Lam B."/>
            <person name="Langin-Hooper S."/>
            <person name="Lee A."/>
            <person name="Lee J.M."/>
            <person name="Lenz C.A."/>
            <person name="Li J.H."/>
            <person name="Li Y.-P."/>
            <person name="Lin X."/>
            <person name="Liu S.X."/>
            <person name="Liu Z.A."/>
            <person name="Luros J.S."/>
            <person name="Maiti R."/>
            <person name="Marziali A."/>
            <person name="Militscher J."/>
            <person name="Miranda M."/>
            <person name="Nguyen M."/>
            <person name="Nierman W.C."/>
            <person name="Osborne B.I."/>
            <person name="Pai G."/>
            <person name="Peterson J."/>
            <person name="Pham P.K."/>
            <person name="Rizzo M."/>
            <person name="Rooney T."/>
            <person name="Rowley D."/>
            <person name="Sakano H."/>
            <person name="Salzberg S.L."/>
            <person name="Schwartz J.R."/>
            <person name="Shinn P."/>
            <person name="Southwick A.M."/>
            <person name="Sun H."/>
            <person name="Tallon L.J."/>
            <person name="Tambunga G."/>
            <person name="Toriumi M.J."/>
            <person name="Town C.D."/>
            <person name="Utterback T."/>
            <person name="Van Aken S."/>
            <person name="Vaysberg M."/>
            <person name="Vysotskaia V.S."/>
            <person name="Walker M."/>
            <person name="Wu D."/>
            <person name="Yu G."/>
            <person name="Fraser C.M."/>
            <person name="Venter J.C."/>
            <person name="Davis R.W."/>
        </authorList>
    </citation>
    <scope>NUCLEOTIDE SEQUENCE [LARGE SCALE GENOMIC DNA]</scope>
    <source>
        <strain>cv. Columbia</strain>
    </source>
</reference>
<reference key="3">
    <citation type="journal article" date="2017" name="Plant J.">
        <title>Araport11: a complete reannotation of the Arabidopsis thaliana reference genome.</title>
        <authorList>
            <person name="Cheng C.Y."/>
            <person name="Krishnakumar V."/>
            <person name="Chan A.P."/>
            <person name="Thibaud-Nissen F."/>
            <person name="Schobel S."/>
            <person name="Town C.D."/>
        </authorList>
    </citation>
    <scope>GENOME REANNOTATION</scope>
    <source>
        <strain>cv. Columbia</strain>
    </source>
</reference>
<reference key="4">
    <citation type="journal article" date="2003" name="Science">
        <title>Empirical analysis of transcriptional activity in the Arabidopsis genome.</title>
        <authorList>
            <person name="Yamada K."/>
            <person name="Lim J."/>
            <person name="Dale J.M."/>
            <person name="Chen H."/>
            <person name="Shinn P."/>
            <person name="Palm C.J."/>
            <person name="Southwick A.M."/>
            <person name="Wu H.C."/>
            <person name="Kim C.J."/>
            <person name="Nguyen M."/>
            <person name="Pham P.K."/>
            <person name="Cheuk R.F."/>
            <person name="Karlin-Newmann G."/>
            <person name="Liu S.X."/>
            <person name="Lam B."/>
            <person name="Sakano H."/>
            <person name="Wu T."/>
            <person name="Yu G."/>
            <person name="Miranda M."/>
            <person name="Quach H.L."/>
            <person name="Tripp M."/>
            <person name="Chang C.H."/>
            <person name="Lee J.M."/>
            <person name="Toriumi M.J."/>
            <person name="Chan M.M."/>
            <person name="Tang C.C."/>
            <person name="Onodera C.S."/>
            <person name="Deng J.M."/>
            <person name="Akiyama K."/>
            <person name="Ansari Y."/>
            <person name="Arakawa T."/>
            <person name="Banh J."/>
            <person name="Banno F."/>
            <person name="Bowser L."/>
            <person name="Brooks S.Y."/>
            <person name="Carninci P."/>
            <person name="Chao Q."/>
            <person name="Choy N."/>
            <person name="Enju A."/>
            <person name="Goldsmith A.D."/>
            <person name="Gurjal M."/>
            <person name="Hansen N.F."/>
            <person name="Hayashizaki Y."/>
            <person name="Johnson-Hopson C."/>
            <person name="Hsuan V.W."/>
            <person name="Iida K."/>
            <person name="Karnes M."/>
            <person name="Khan S."/>
            <person name="Koesema E."/>
            <person name="Ishida J."/>
            <person name="Jiang P.X."/>
            <person name="Jones T."/>
            <person name="Kawai J."/>
            <person name="Kamiya A."/>
            <person name="Meyers C."/>
            <person name="Nakajima M."/>
            <person name="Narusaka M."/>
            <person name="Seki M."/>
            <person name="Sakurai T."/>
            <person name="Satou M."/>
            <person name="Tamse R."/>
            <person name="Vaysberg M."/>
            <person name="Wallender E.K."/>
            <person name="Wong C."/>
            <person name="Yamamura Y."/>
            <person name="Yuan S."/>
            <person name="Shinozaki K."/>
            <person name="Davis R.W."/>
            <person name="Theologis A."/>
            <person name="Ecker J.R."/>
        </authorList>
    </citation>
    <scope>NUCLEOTIDE SEQUENCE [LARGE SCALE MRNA]</scope>
    <source>
        <strain>cv. Columbia</strain>
    </source>
</reference>
<reference key="5">
    <citation type="submission" date="2004-12" db="EMBL/GenBank/DDBJ databases">
        <title>Arabidopsis ORF clones.</title>
        <authorList>
            <person name="Shinn P."/>
            <person name="Chen H."/>
            <person name="Cheuk R.F."/>
            <person name="Kim C.J."/>
            <person name="Ecker J.R."/>
        </authorList>
    </citation>
    <scope>NUCLEOTIDE SEQUENCE [LARGE SCALE MRNA]</scope>
    <source>
        <strain>cv. Columbia</strain>
    </source>
</reference>
<reference key="6">
    <citation type="journal article" date="1997" name="J. Membr. Biol.">
        <title>A kinetic model with ordered cytoplasmic dissociation for SUC1, an Arabidopsis H(+)/sucrose cotransporter expressed in Xenopus oocytes.</title>
        <authorList>
            <person name="Zhou J.-J."/>
            <person name="Theodoulou F."/>
            <person name="Sauer N."/>
            <person name="Sanders D."/>
            <person name="Miller A.J."/>
        </authorList>
    </citation>
    <scope>FUNCTION</scope>
</reference>
<reference key="7">
    <citation type="journal article" date="1998" name="Proc. Natl. Acad. Sci. U.S.A.">
        <title>His-65 in the proton-sucrose symporter is an essential amino acid whose modification with site-directed mutagenesis increases transport activity.</title>
        <authorList>
            <person name="Lu J.M.-Y."/>
            <person name="Bush D.R."/>
        </authorList>
    </citation>
    <scope>BIOPHYSICOCHEMICAL PROPERTIES</scope>
    <scope>ACTIVITY REGULATION</scope>
    <scope>MUTAGENESIS OF HIS-65</scope>
    <scope>TRANSPORTER ACTIVITY</scope>
</reference>
<reference key="8">
    <citation type="journal article" date="1999" name="Plant J.">
        <title>The AtSUC1 sucrose carrier may represent the osmotic driving force for anther dehiscence and pollen tube growth in Arabidopsis.</title>
        <authorList>
            <person name="Stadler R."/>
            <person name="Truernit E."/>
            <person name="Gahrtz M."/>
            <person name="Sauer N."/>
        </authorList>
    </citation>
    <scope>FUNCTION</scope>
    <scope>DEVELOPMENTAL STAGE</scope>
    <scope>TISSUE SPECIFICITY</scope>
</reference>
<reference key="9">
    <citation type="journal article" date="2001" name="Plant Cell Physiol.">
        <title>Sugar-induced increase in cytosolic Ca(2+) in Arabidopsis thaliana whole plants.</title>
        <authorList>
            <person name="Furuichi T."/>
            <person name="Mori I.C."/>
            <person name="Takahashi K."/>
            <person name="Muto S."/>
        </authorList>
    </citation>
    <scope>INDUCTION</scope>
</reference>
<reference key="10">
    <citation type="journal article" date="2007" name="Mol. Cell. Proteomics">
        <title>Temporal analysis of sucrose-induced phosphorylation changes in plasma membrane proteins of Arabidopsis.</title>
        <authorList>
            <person name="Niittylae T."/>
            <person name="Fuglsang A.T."/>
            <person name="Palmgren M.G."/>
            <person name="Frommer W.B."/>
            <person name="Schulze W.X."/>
        </authorList>
    </citation>
    <scope>PHOSPHORYLATION [LARGE SCALE ANALYSIS] AT SER-20</scope>
    <scope>IDENTIFICATION BY MASS SPECTROMETRY [LARGE SCALE ANALYSIS]</scope>
    <source>
        <tissue>Seedling</tissue>
    </source>
</reference>
<reference key="11">
    <citation type="journal article" date="2008" name="Plant Physiol.">
        <title>Arabidopsis sucrose transporter AtSUC1 is important for pollen germination and sucrose-induced anthocyanin accumulation.</title>
        <authorList>
            <person name="Sivitz A.B."/>
            <person name="Reinders A."/>
            <person name="Ward J.M."/>
        </authorList>
    </citation>
    <scope>FUNCTION</scope>
    <scope>TISSUE SPECIFICITY</scope>
    <scope>INDUCTION</scope>
    <scope>DISRUPTION PHENOTYPE</scope>
</reference>
<dbReference type="EMBL" id="X75365">
    <property type="protein sequence ID" value="CAA53147.1"/>
    <property type="molecule type" value="mRNA"/>
</dbReference>
<dbReference type="EMBL" id="AC021665">
    <property type="protein sequence ID" value="AAG52225.1"/>
    <property type="molecule type" value="Genomic_DNA"/>
</dbReference>
<dbReference type="EMBL" id="CP002684">
    <property type="protein sequence ID" value="AEE35247.1"/>
    <property type="molecule type" value="Genomic_DNA"/>
</dbReference>
<dbReference type="EMBL" id="AY049275">
    <property type="protein sequence ID" value="AAK83617.1"/>
    <property type="molecule type" value="mRNA"/>
</dbReference>
<dbReference type="EMBL" id="BT020416">
    <property type="protein sequence ID" value="AAV97807.1"/>
    <property type="molecule type" value="mRNA"/>
</dbReference>
<dbReference type="PIR" id="S38197">
    <property type="entry name" value="S38197"/>
</dbReference>
<dbReference type="RefSeq" id="NP_177333.1">
    <property type="nucleotide sequence ID" value="NM_105846.4"/>
</dbReference>
<dbReference type="PDB" id="8BB6">
    <property type="method" value="X-ray"/>
    <property type="resolution" value="2.68 A"/>
    <property type="chains" value="A/B=2-513"/>
</dbReference>
<dbReference type="PDBsum" id="8BB6"/>
<dbReference type="SMR" id="Q39232"/>
<dbReference type="BioGRID" id="28739">
    <property type="interactions" value="7"/>
</dbReference>
<dbReference type="FunCoup" id="Q39232">
    <property type="interactions" value="985"/>
</dbReference>
<dbReference type="STRING" id="3702.Q39232"/>
<dbReference type="TCDB" id="2.A.2.4.1">
    <property type="family name" value="the glycoside-pentoside-hexuronide (gph):cation symporter family"/>
</dbReference>
<dbReference type="iPTMnet" id="Q39232"/>
<dbReference type="PaxDb" id="3702-AT1G71880.1"/>
<dbReference type="ProteomicsDB" id="245227"/>
<dbReference type="EnsemblPlants" id="AT1G71880.1">
    <property type="protein sequence ID" value="AT1G71880.1"/>
    <property type="gene ID" value="AT1G71880"/>
</dbReference>
<dbReference type="GeneID" id="843519"/>
<dbReference type="Gramene" id="AT1G71880.1">
    <property type="protein sequence ID" value="AT1G71880.1"/>
    <property type="gene ID" value="AT1G71880"/>
</dbReference>
<dbReference type="KEGG" id="ath:AT1G71880"/>
<dbReference type="Araport" id="AT1G71880"/>
<dbReference type="TAIR" id="AT1G71880">
    <property type="gene designation" value="SUC1"/>
</dbReference>
<dbReference type="eggNOG" id="KOG0637">
    <property type="taxonomic scope" value="Eukaryota"/>
</dbReference>
<dbReference type="HOGENOM" id="CLU_025234_3_0_1"/>
<dbReference type="InParanoid" id="Q39232"/>
<dbReference type="OMA" id="FICIPQI"/>
<dbReference type="PhylomeDB" id="Q39232"/>
<dbReference type="BioCyc" id="MetaCyc:AT1G71880-MONOMER"/>
<dbReference type="SABIO-RK" id="Q39232"/>
<dbReference type="UniPathway" id="UPA00238"/>
<dbReference type="PRO" id="PR:Q39232"/>
<dbReference type="Proteomes" id="UP000006548">
    <property type="component" value="Chromosome 1"/>
</dbReference>
<dbReference type="ExpressionAtlas" id="Q39232">
    <property type="expression patterns" value="baseline and differential"/>
</dbReference>
<dbReference type="GO" id="GO:0005739">
    <property type="term" value="C:mitochondrion"/>
    <property type="evidence" value="ECO:0007005"/>
    <property type="project" value="TAIR"/>
</dbReference>
<dbReference type="GO" id="GO:0005886">
    <property type="term" value="C:plasma membrane"/>
    <property type="evidence" value="ECO:0000314"/>
    <property type="project" value="TAIR"/>
</dbReference>
<dbReference type="GO" id="GO:0009506">
    <property type="term" value="C:plasmodesma"/>
    <property type="evidence" value="ECO:0007005"/>
    <property type="project" value="TAIR"/>
</dbReference>
<dbReference type="GO" id="GO:0005773">
    <property type="term" value="C:vacuole"/>
    <property type="evidence" value="ECO:0007005"/>
    <property type="project" value="TAIR"/>
</dbReference>
<dbReference type="GO" id="GO:0008506">
    <property type="term" value="F:sucrose:proton symporter activity"/>
    <property type="evidence" value="ECO:0000314"/>
    <property type="project" value="TAIR"/>
</dbReference>
<dbReference type="GO" id="GO:0009846">
    <property type="term" value="P:pollen germination"/>
    <property type="evidence" value="ECO:0000315"/>
    <property type="project" value="TAIR"/>
</dbReference>
<dbReference type="GO" id="GO:0009624">
    <property type="term" value="P:response to nematode"/>
    <property type="evidence" value="ECO:0007007"/>
    <property type="project" value="TAIR"/>
</dbReference>
<dbReference type="GO" id="GO:0005985">
    <property type="term" value="P:sucrose metabolic process"/>
    <property type="evidence" value="ECO:0007669"/>
    <property type="project" value="UniProtKB-UniPathway"/>
</dbReference>
<dbReference type="CDD" id="cd17313">
    <property type="entry name" value="MFS_SLC45_SUC"/>
    <property type="match status" value="1"/>
</dbReference>
<dbReference type="FunFam" id="1.20.1250.20:FF:000174">
    <property type="entry name" value="Sucrose transport protein"/>
    <property type="match status" value="1"/>
</dbReference>
<dbReference type="Gene3D" id="1.20.1250.20">
    <property type="entry name" value="MFS general substrate transporter like domains"/>
    <property type="match status" value="1"/>
</dbReference>
<dbReference type="InterPro" id="IPR011701">
    <property type="entry name" value="MFS"/>
</dbReference>
<dbReference type="InterPro" id="IPR036259">
    <property type="entry name" value="MFS_trans_sf"/>
</dbReference>
<dbReference type="InterPro" id="IPR005989">
    <property type="entry name" value="Suc_symporter_pln"/>
</dbReference>
<dbReference type="NCBIfam" id="TIGR01301">
    <property type="entry name" value="GPH_sucrose"/>
    <property type="match status" value="1"/>
</dbReference>
<dbReference type="PANTHER" id="PTHR19432:SF70">
    <property type="entry name" value="SUCROSE TRANSPORT PROTEIN SUC1-RELATED"/>
    <property type="match status" value="1"/>
</dbReference>
<dbReference type="PANTHER" id="PTHR19432">
    <property type="entry name" value="SUGAR TRANSPORTER"/>
    <property type="match status" value="1"/>
</dbReference>
<dbReference type="Pfam" id="PF07690">
    <property type="entry name" value="MFS_1"/>
    <property type="match status" value="1"/>
</dbReference>
<dbReference type="SUPFAM" id="SSF103473">
    <property type="entry name" value="MFS general substrate transporter"/>
    <property type="match status" value="1"/>
</dbReference>
<keyword id="KW-0002">3D-structure</keyword>
<keyword id="KW-0472">Membrane</keyword>
<keyword id="KW-0597">Phosphoprotein</keyword>
<keyword id="KW-1185">Reference proteome</keyword>
<keyword id="KW-0762">Sugar transport</keyword>
<keyword id="KW-0769">Symport</keyword>
<keyword id="KW-0812">Transmembrane</keyword>
<keyword id="KW-1133">Transmembrane helix</keyword>
<keyword id="KW-0813">Transport</keyword>
<name>SUC1_ARATH</name>